<keyword id="KW-0004">4Fe-4S</keyword>
<keyword id="KW-0150">Chloroplast</keyword>
<keyword id="KW-1015">Disulfide bond</keyword>
<keyword id="KW-0408">Iron</keyword>
<keyword id="KW-0411">Iron-sulfur</keyword>
<keyword id="KW-0479">Metal-binding</keyword>
<keyword id="KW-0560">Oxidoreductase</keyword>
<keyword id="KW-0934">Plastid</keyword>
<keyword id="KW-0676">Redox-active center</keyword>
<keyword id="KW-1185">Reference proteome</keyword>
<keyword id="KW-0809">Transit peptide</keyword>
<comment type="function">
    <text evidence="1">Catalytic subunit of the ferredoxin-thioredoxin reductase (FTR), which catalyzes the two-electron reduction of thioredoxins by the electrons provided by reduced ferredoxin.</text>
</comment>
<comment type="catalytic activity">
    <reaction>
        <text>[thioredoxin]-disulfide + 2 reduced [2Fe-2S]-[ferredoxin] + 2 H(+) = [thioredoxin]-dithiol + 2 oxidized [2Fe-2S]-[ferredoxin]</text>
        <dbReference type="Rhea" id="RHEA:42336"/>
        <dbReference type="Rhea" id="RHEA-COMP:10000"/>
        <dbReference type="Rhea" id="RHEA-COMP:10001"/>
        <dbReference type="Rhea" id="RHEA-COMP:10698"/>
        <dbReference type="Rhea" id="RHEA-COMP:10700"/>
        <dbReference type="ChEBI" id="CHEBI:15378"/>
        <dbReference type="ChEBI" id="CHEBI:29950"/>
        <dbReference type="ChEBI" id="CHEBI:33737"/>
        <dbReference type="ChEBI" id="CHEBI:33738"/>
        <dbReference type="ChEBI" id="CHEBI:50058"/>
        <dbReference type="EC" id="1.8.7.2"/>
    </reaction>
</comment>
<comment type="cofactor">
    <cofactor evidence="1">
        <name>[4Fe-4S] cluster</name>
        <dbReference type="ChEBI" id="CHEBI:49883"/>
    </cofactor>
    <text evidence="1">Binds 1 [4Fe-4S] cluster.</text>
</comment>
<comment type="subunit">
    <text evidence="1">Heterodimer of subunit A (variable subunit) and subunit B (catalytic subunit). Heterodimeric FTR forms a complex with ferredoxin and thioredoxin (By similarity).</text>
</comment>
<comment type="subcellular location">
    <subcellularLocation>
        <location evidence="3">Plastid</location>
        <location evidence="3">Chloroplast</location>
    </subcellularLocation>
</comment>
<comment type="similarity">
    <text evidence="3">Belongs to the ferredoxin thioredoxin reductase beta subunit family.</text>
</comment>
<comment type="sequence caution" evidence="3">
    <conflict type="erroneous initiation">
        <sequence resource="EMBL-CDS" id="BAF24589"/>
    </conflict>
    <text>Extended N-terminus.</text>
</comment>
<reference key="1">
    <citation type="journal article" date="2005" name="Nature">
        <title>The map-based sequence of the rice genome.</title>
        <authorList>
            <consortium name="International rice genome sequencing project (IRGSP)"/>
        </authorList>
    </citation>
    <scope>NUCLEOTIDE SEQUENCE [LARGE SCALE GENOMIC DNA]</scope>
    <source>
        <strain>cv. Nipponbare</strain>
    </source>
</reference>
<reference key="2">
    <citation type="journal article" date="2008" name="Nucleic Acids Res.">
        <title>The rice annotation project database (RAP-DB): 2008 update.</title>
        <authorList>
            <consortium name="The rice annotation project (RAP)"/>
        </authorList>
    </citation>
    <scope>GENOME REANNOTATION</scope>
    <source>
        <strain>cv. Nipponbare</strain>
    </source>
</reference>
<reference key="3">
    <citation type="journal article" date="2013" name="Rice">
        <title>Improvement of the Oryza sativa Nipponbare reference genome using next generation sequence and optical map data.</title>
        <authorList>
            <person name="Kawahara Y."/>
            <person name="de la Bastide M."/>
            <person name="Hamilton J.P."/>
            <person name="Kanamori H."/>
            <person name="McCombie W.R."/>
            <person name="Ouyang S."/>
            <person name="Schwartz D.C."/>
            <person name="Tanaka T."/>
            <person name="Wu J."/>
            <person name="Zhou S."/>
            <person name="Childs K.L."/>
            <person name="Davidson R.M."/>
            <person name="Lin H."/>
            <person name="Quesada-Ocampo L."/>
            <person name="Vaillancourt B."/>
            <person name="Sakai H."/>
            <person name="Lee S.S."/>
            <person name="Kim J."/>
            <person name="Numa H."/>
            <person name="Itoh T."/>
            <person name="Buell C.R."/>
            <person name="Matsumoto T."/>
        </authorList>
    </citation>
    <scope>GENOME REANNOTATION</scope>
    <source>
        <strain>cv. Nipponbare</strain>
    </source>
</reference>
<reference key="4">
    <citation type="journal article" date="2005" name="PLoS Biol.">
        <title>The genomes of Oryza sativa: a history of duplications.</title>
        <authorList>
            <person name="Yu J."/>
            <person name="Wang J."/>
            <person name="Lin W."/>
            <person name="Li S."/>
            <person name="Li H."/>
            <person name="Zhou J."/>
            <person name="Ni P."/>
            <person name="Dong W."/>
            <person name="Hu S."/>
            <person name="Zeng C."/>
            <person name="Zhang J."/>
            <person name="Zhang Y."/>
            <person name="Li R."/>
            <person name="Xu Z."/>
            <person name="Li S."/>
            <person name="Li X."/>
            <person name="Zheng H."/>
            <person name="Cong L."/>
            <person name="Lin L."/>
            <person name="Yin J."/>
            <person name="Geng J."/>
            <person name="Li G."/>
            <person name="Shi J."/>
            <person name="Liu J."/>
            <person name="Lv H."/>
            <person name="Li J."/>
            <person name="Wang J."/>
            <person name="Deng Y."/>
            <person name="Ran L."/>
            <person name="Shi X."/>
            <person name="Wang X."/>
            <person name="Wu Q."/>
            <person name="Li C."/>
            <person name="Ren X."/>
            <person name="Wang J."/>
            <person name="Wang X."/>
            <person name="Li D."/>
            <person name="Liu D."/>
            <person name="Zhang X."/>
            <person name="Ji Z."/>
            <person name="Zhao W."/>
            <person name="Sun Y."/>
            <person name="Zhang Z."/>
            <person name="Bao J."/>
            <person name="Han Y."/>
            <person name="Dong L."/>
            <person name="Ji J."/>
            <person name="Chen P."/>
            <person name="Wu S."/>
            <person name="Liu J."/>
            <person name="Xiao Y."/>
            <person name="Bu D."/>
            <person name="Tan J."/>
            <person name="Yang L."/>
            <person name="Ye C."/>
            <person name="Zhang J."/>
            <person name="Xu J."/>
            <person name="Zhou Y."/>
            <person name="Yu Y."/>
            <person name="Zhang B."/>
            <person name="Zhuang S."/>
            <person name="Wei H."/>
            <person name="Liu B."/>
            <person name="Lei M."/>
            <person name="Yu H."/>
            <person name="Li Y."/>
            <person name="Xu H."/>
            <person name="Wei S."/>
            <person name="He X."/>
            <person name="Fang L."/>
            <person name="Zhang Z."/>
            <person name="Zhang Y."/>
            <person name="Huang X."/>
            <person name="Su Z."/>
            <person name="Tong W."/>
            <person name="Li J."/>
            <person name="Tong Z."/>
            <person name="Li S."/>
            <person name="Ye J."/>
            <person name="Wang L."/>
            <person name="Fang L."/>
            <person name="Lei T."/>
            <person name="Chen C.-S."/>
            <person name="Chen H.-C."/>
            <person name="Xu Z."/>
            <person name="Li H."/>
            <person name="Huang H."/>
            <person name="Zhang F."/>
            <person name="Xu H."/>
            <person name="Li N."/>
            <person name="Zhao C."/>
            <person name="Li S."/>
            <person name="Dong L."/>
            <person name="Huang Y."/>
            <person name="Li L."/>
            <person name="Xi Y."/>
            <person name="Qi Q."/>
            <person name="Li W."/>
            <person name="Zhang B."/>
            <person name="Hu W."/>
            <person name="Zhang Y."/>
            <person name="Tian X."/>
            <person name="Jiao Y."/>
            <person name="Liang X."/>
            <person name="Jin J."/>
            <person name="Gao L."/>
            <person name="Zheng W."/>
            <person name="Hao B."/>
            <person name="Liu S.-M."/>
            <person name="Wang W."/>
            <person name="Yuan L."/>
            <person name="Cao M."/>
            <person name="McDermott J."/>
            <person name="Samudrala R."/>
            <person name="Wang J."/>
            <person name="Wong G.K.-S."/>
            <person name="Yang H."/>
        </authorList>
    </citation>
    <scope>NUCLEOTIDE SEQUENCE [LARGE SCALE GENOMIC DNA]</scope>
    <source>
        <strain>cv. Nipponbare</strain>
    </source>
</reference>
<reference key="5">
    <citation type="journal article" date="2003" name="Science">
        <title>Collection, mapping, and annotation of over 28,000 cDNA clones from japonica rice.</title>
        <authorList>
            <consortium name="The rice full-length cDNA consortium"/>
        </authorList>
    </citation>
    <scope>NUCLEOTIDE SEQUENCE [LARGE SCALE MRNA]</scope>
    <source>
        <strain>cv. Nipponbare</strain>
    </source>
</reference>
<proteinExistence type="evidence at transcript level"/>
<protein>
    <recommendedName>
        <fullName>Ferredoxin-thioredoxin reductase catalytic chain, chloroplastic</fullName>
        <shortName>FTR-C</shortName>
        <ecNumber>1.8.7.2</ecNumber>
    </recommendedName>
    <alternativeName>
        <fullName>Ferredoxin-thioredoxin reductase subunit B</fullName>
        <shortName>FTR-B</shortName>
    </alternativeName>
</protein>
<sequence>MMSMASTTASPFCPSPMPRGRKCTVRVQAGAAGADASDKSLEIMRKFSEQYARRSNTFFCSEKSVTAVVIKGLADHKDQLGAPLCPCRHYDDKAAEVAQGFWNCPCVPMRERKECHCMLFLTPDNDFAGQDQAITLEEIKDATSKI</sequence>
<evidence type="ECO:0000250" key="1"/>
<evidence type="ECO:0000255" key="2"/>
<evidence type="ECO:0000305" key="3"/>
<name>FTRC_ORYSJ</name>
<dbReference type="EC" id="1.8.7.2"/>
<dbReference type="EMBL" id="AP005553">
    <property type="protein sequence ID" value="BAD22216.1"/>
    <property type="molecule type" value="Genomic_DNA"/>
</dbReference>
<dbReference type="EMBL" id="AP005578">
    <property type="protein sequence ID" value="BAD19914.1"/>
    <property type="molecule type" value="Genomic_DNA"/>
</dbReference>
<dbReference type="EMBL" id="AP008215">
    <property type="protein sequence ID" value="BAF24589.2"/>
    <property type="status" value="ALT_INIT"/>
    <property type="molecule type" value="Genomic_DNA"/>
</dbReference>
<dbReference type="EMBL" id="AP014965">
    <property type="protein sequence ID" value="BAT07039.1"/>
    <property type="molecule type" value="Genomic_DNA"/>
</dbReference>
<dbReference type="EMBL" id="CM000146">
    <property type="protein sequence ID" value="EEE69266.1"/>
    <property type="molecule type" value="Genomic_DNA"/>
</dbReference>
<dbReference type="EMBL" id="AK099860">
    <property type="protein sequence ID" value="BAG94324.1"/>
    <property type="molecule type" value="mRNA"/>
</dbReference>
<dbReference type="RefSeq" id="XP_015651145.1">
    <property type="nucleotide sequence ID" value="XM_015795659.1"/>
</dbReference>
<dbReference type="SMR" id="Q6K471"/>
<dbReference type="FunCoup" id="Q6K471">
    <property type="interactions" value="984"/>
</dbReference>
<dbReference type="STRING" id="39947.Q6K471"/>
<dbReference type="PaxDb" id="39947-Q6K471"/>
<dbReference type="EnsemblPlants" id="Os09t0249900-01">
    <property type="protein sequence ID" value="Os09t0249900-01"/>
    <property type="gene ID" value="Os09g0249900"/>
</dbReference>
<dbReference type="Gramene" id="Os09t0249900-01">
    <property type="protein sequence ID" value="Os09t0249900-01"/>
    <property type="gene ID" value="Os09g0249900"/>
</dbReference>
<dbReference type="KEGG" id="dosa:Os09g0249900"/>
<dbReference type="eggNOG" id="ENOG502RZRI">
    <property type="taxonomic scope" value="Eukaryota"/>
</dbReference>
<dbReference type="HOGENOM" id="CLU_108772_1_0_1"/>
<dbReference type="InParanoid" id="Q6K471"/>
<dbReference type="OMA" id="YCHCLLF"/>
<dbReference type="OrthoDB" id="1641at2759"/>
<dbReference type="Proteomes" id="UP000000763">
    <property type="component" value="Chromosome 9"/>
</dbReference>
<dbReference type="Proteomes" id="UP000007752">
    <property type="component" value="Chromosome 9"/>
</dbReference>
<dbReference type="Proteomes" id="UP000059680">
    <property type="component" value="Chromosome 9"/>
</dbReference>
<dbReference type="GO" id="GO:0009507">
    <property type="term" value="C:chloroplast"/>
    <property type="evidence" value="ECO:0007669"/>
    <property type="project" value="UniProtKB-SubCell"/>
</dbReference>
<dbReference type="GO" id="GO:0051539">
    <property type="term" value="F:4 iron, 4 sulfur cluster binding"/>
    <property type="evidence" value="ECO:0000250"/>
    <property type="project" value="UniProtKB"/>
</dbReference>
<dbReference type="GO" id="GO:0009055">
    <property type="term" value="F:electron transfer activity"/>
    <property type="evidence" value="ECO:0000250"/>
    <property type="project" value="UniProtKB"/>
</dbReference>
<dbReference type="GO" id="GO:0103012">
    <property type="term" value="F:ferredoxin-thioredoxin reductase activity"/>
    <property type="evidence" value="ECO:0000250"/>
    <property type="project" value="UniProtKB"/>
</dbReference>
<dbReference type="GO" id="GO:0046872">
    <property type="term" value="F:metal ion binding"/>
    <property type="evidence" value="ECO:0007669"/>
    <property type="project" value="UniProtKB-KW"/>
</dbReference>
<dbReference type="GO" id="GO:0016730">
    <property type="term" value="F:oxidoreductase activity, acting on iron-sulfur proteins as donors"/>
    <property type="evidence" value="ECO:0007669"/>
    <property type="project" value="InterPro"/>
</dbReference>
<dbReference type="FunFam" id="3.90.460.10:FF:000001">
    <property type="entry name" value="Ferredoxin-thioredoxin reductase, catalytic chain"/>
    <property type="match status" value="1"/>
</dbReference>
<dbReference type="Gene3D" id="3.90.460.10">
    <property type="entry name" value="Ferredoxin thioredoxin reductase catalytic beta subunit"/>
    <property type="match status" value="1"/>
</dbReference>
<dbReference type="InterPro" id="IPR004209">
    <property type="entry name" value="FTR_bsu"/>
</dbReference>
<dbReference type="InterPro" id="IPR036644">
    <property type="entry name" value="FTR_bsu_sf"/>
</dbReference>
<dbReference type="PANTHER" id="PTHR35113">
    <property type="entry name" value="FERREDOXIN-THIOREDOXIN REDUCTASE CATALYTIC CHAIN, CHLOROPLASTIC"/>
    <property type="match status" value="1"/>
</dbReference>
<dbReference type="PANTHER" id="PTHR35113:SF1">
    <property type="entry name" value="FERREDOXIN-THIOREDOXIN REDUCTASE CATALYTIC CHAIN, CHLOROPLASTIC"/>
    <property type="match status" value="1"/>
</dbReference>
<dbReference type="Pfam" id="PF02943">
    <property type="entry name" value="FeThRed_B"/>
    <property type="match status" value="1"/>
</dbReference>
<dbReference type="SUPFAM" id="SSF57662">
    <property type="entry name" value="Ferredoxin thioredoxin reductase (FTR), catalytic beta chain"/>
    <property type="match status" value="1"/>
</dbReference>
<accession>Q6K471</accession>
<accession>A0A0P0XJ79</accession>
<accession>Q0J376</accession>
<gene>
    <name type="ordered locus">Os09g0249900</name>
    <name type="ordered locus">LOC_Os09g07570</name>
    <name type="ORF">OJ1116_H10.13</name>
    <name type="ORF">OJ1695_A02.34</name>
    <name type="ORF">OsJ_28527</name>
</gene>
<feature type="transit peptide" description="Chloroplast" evidence="2">
    <location>
        <begin position="1"/>
        <end position="26"/>
    </location>
</feature>
<feature type="chain" id="PRO_0000394860" description="Ferredoxin-thioredoxin reductase catalytic chain, chloroplastic">
    <location>
        <begin position="27"/>
        <end position="146"/>
    </location>
</feature>
<feature type="active site" description="Nucleophile" evidence="1">
    <location>
        <position position="87"/>
    </location>
</feature>
<feature type="binding site" evidence="1">
    <location>
        <position position="85"/>
    </location>
    <ligand>
        <name>[4Fe-4S] cluster</name>
        <dbReference type="ChEBI" id="CHEBI:49883"/>
    </ligand>
</feature>
<feature type="binding site" evidence="1">
    <location>
        <position position="104"/>
    </location>
    <ligand>
        <name>[4Fe-4S] cluster</name>
        <dbReference type="ChEBI" id="CHEBI:49883"/>
    </ligand>
</feature>
<feature type="binding site" evidence="1">
    <location>
        <position position="106"/>
    </location>
    <ligand>
        <name>[4Fe-4S] cluster</name>
        <dbReference type="ChEBI" id="CHEBI:49883"/>
    </ligand>
</feature>
<feature type="binding site" evidence="1">
    <location>
        <position position="115"/>
    </location>
    <ligand>
        <name>[4Fe-4S] cluster</name>
        <dbReference type="ChEBI" id="CHEBI:49883"/>
    </ligand>
</feature>
<feature type="site" description="Increases the nucleophilicity of the active site Cys" evidence="1">
    <location>
        <position position="116"/>
    </location>
</feature>
<feature type="disulfide bond" description="Redox-active" evidence="1">
    <location>
        <begin position="87"/>
        <end position="117"/>
    </location>
</feature>
<organism>
    <name type="scientific">Oryza sativa subsp. japonica</name>
    <name type="common">Rice</name>
    <dbReference type="NCBI Taxonomy" id="39947"/>
    <lineage>
        <taxon>Eukaryota</taxon>
        <taxon>Viridiplantae</taxon>
        <taxon>Streptophyta</taxon>
        <taxon>Embryophyta</taxon>
        <taxon>Tracheophyta</taxon>
        <taxon>Spermatophyta</taxon>
        <taxon>Magnoliopsida</taxon>
        <taxon>Liliopsida</taxon>
        <taxon>Poales</taxon>
        <taxon>Poaceae</taxon>
        <taxon>BOP clade</taxon>
        <taxon>Oryzoideae</taxon>
        <taxon>Oryzeae</taxon>
        <taxon>Oryzinae</taxon>
        <taxon>Oryza</taxon>
        <taxon>Oryza sativa</taxon>
    </lineage>
</organism>